<comment type="function">
    <text evidence="1">Binds 23S rRNA and is also seen to make contacts with the A and possibly P site tRNAs.</text>
</comment>
<comment type="subunit">
    <text evidence="1">Part of the 50S ribosomal subunit.</text>
</comment>
<comment type="similarity">
    <text evidence="1">Belongs to the universal ribosomal protein uL16 family.</text>
</comment>
<comment type="sequence caution" evidence="2">
    <conflict type="erroneous initiation">
        <sequence resource="EMBL-CDS" id="ABK83530"/>
    </conflict>
</comment>
<sequence>MLMPKRVKYRREHRGKMRGRAKGGTEIAFGEFGLQAQAASWITNRQIEAARRAMTRYMKRGGKVWIKIFPSKPYTAKPLEVRMGSGKGAPEGWVAVVKPGKIMFEIAGVSEEVAREALRLAAHKLPVKCKFVKREENGGESNEN</sequence>
<feature type="chain" id="PRO_0000354598" description="Large ribosomal subunit protein uL16">
    <location>
        <begin position="1"/>
        <end position="144"/>
    </location>
</feature>
<keyword id="KW-0687">Ribonucleoprotein</keyword>
<keyword id="KW-0689">Ribosomal protein</keyword>
<keyword id="KW-0694">RNA-binding</keyword>
<keyword id="KW-0699">rRNA-binding</keyword>
<keyword id="KW-0820">tRNA-binding</keyword>
<dbReference type="EMBL" id="CP000485">
    <property type="protein sequence ID" value="ABK83530.1"/>
    <property type="status" value="ALT_INIT"/>
    <property type="molecule type" value="Genomic_DNA"/>
</dbReference>
<dbReference type="RefSeq" id="WP_000928969.1">
    <property type="nucleotide sequence ID" value="NC_008600.1"/>
</dbReference>
<dbReference type="SMR" id="A0R8I7"/>
<dbReference type="GeneID" id="93010936"/>
<dbReference type="KEGG" id="btl:BALH_0115"/>
<dbReference type="HOGENOM" id="CLU_078858_2_1_9"/>
<dbReference type="GO" id="GO:0022625">
    <property type="term" value="C:cytosolic large ribosomal subunit"/>
    <property type="evidence" value="ECO:0007669"/>
    <property type="project" value="TreeGrafter"/>
</dbReference>
<dbReference type="GO" id="GO:0019843">
    <property type="term" value="F:rRNA binding"/>
    <property type="evidence" value="ECO:0007669"/>
    <property type="project" value="UniProtKB-UniRule"/>
</dbReference>
<dbReference type="GO" id="GO:0003735">
    <property type="term" value="F:structural constituent of ribosome"/>
    <property type="evidence" value="ECO:0007669"/>
    <property type="project" value="InterPro"/>
</dbReference>
<dbReference type="GO" id="GO:0000049">
    <property type="term" value="F:tRNA binding"/>
    <property type="evidence" value="ECO:0007669"/>
    <property type="project" value="UniProtKB-KW"/>
</dbReference>
<dbReference type="GO" id="GO:0006412">
    <property type="term" value="P:translation"/>
    <property type="evidence" value="ECO:0007669"/>
    <property type="project" value="UniProtKB-UniRule"/>
</dbReference>
<dbReference type="CDD" id="cd01433">
    <property type="entry name" value="Ribosomal_L16_L10e"/>
    <property type="match status" value="1"/>
</dbReference>
<dbReference type="FunFam" id="3.90.1170.10:FF:000001">
    <property type="entry name" value="50S ribosomal protein L16"/>
    <property type="match status" value="1"/>
</dbReference>
<dbReference type="Gene3D" id="3.90.1170.10">
    <property type="entry name" value="Ribosomal protein L10e/L16"/>
    <property type="match status" value="1"/>
</dbReference>
<dbReference type="HAMAP" id="MF_01342">
    <property type="entry name" value="Ribosomal_uL16"/>
    <property type="match status" value="1"/>
</dbReference>
<dbReference type="InterPro" id="IPR047873">
    <property type="entry name" value="Ribosomal_uL16"/>
</dbReference>
<dbReference type="InterPro" id="IPR000114">
    <property type="entry name" value="Ribosomal_uL16_bact-type"/>
</dbReference>
<dbReference type="InterPro" id="IPR020798">
    <property type="entry name" value="Ribosomal_uL16_CS"/>
</dbReference>
<dbReference type="InterPro" id="IPR016180">
    <property type="entry name" value="Ribosomal_uL16_dom"/>
</dbReference>
<dbReference type="InterPro" id="IPR036920">
    <property type="entry name" value="Ribosomal_uL16_sf"/>
</dbReference>
<dbReference type="NCBIfam" id="TIGR01164">
    <property type="entry name" value="rplP_bact"/>
    <property type="match status" value="1"/>
</dbReference>
<dbReference type="PANTHER" id="PTHR12220">
    <property type="entry name" value="50S/60S RIBOSOMAL PROTEIN L16"/>
    <property type="match status" value="1"/>
</dbReference>
<dbReference type="PANTHER" id="PTHR12220:SF13">
    <property type="entry name" value="LARGE RIBOSOMAL SUBUNIT PROTEIN UL16M"/>
    <property type="match status" value="1"/>
</dbReference>
<dbReference type="Pfam" id="PF00252">
    <property type="entry name" value="Ribosomal_L16"/>
    <property type="match status" value="1"/>
</dbReference>
<dbReference type="PRINTS" id="PR00060">
    <property type="entry name" value="RIBOSOMALL16"/>
</dbReference>
<dbReference type="SUPFAM" id="SSF54686">
    <property type="entry name" value="Ribosomal protein L16p/L10e"/>
    <property type="match status" value="1"/>
</dbReference>
<dbReference type="PROSITE" id="PS00586">
    <property type="entry name" value="RIBOSOMAL_L16_1"/>
    <property type="match status" value="1"/>
</dbReference>
<dbReference type="PROSITE" id="PS00701">
    <property type="entry name" value="RIBOSOMAL_L16_2"/>
    <property type="match status" value="1"/>
</dbReference>
<accession>A0R8I7</accession>
<protein>
    <recommendedName>
        <fullName evidence="1">Large ribosomal subunit protein uL16</fullName>
    </recommendedName>
    <alternativeName>
        <fullName evidence="2">50S ribosomal protein L16</fullName>
    </alternativeName>
</protein>
<gene>
    <name evidence="1" type="primary">rplP</name>
    <name type="ordered locus">BALH_0115</name>
</gene>
<reference key="1">
    <citation type="journal article" date="2007" name="J. Bacteriol.">
        <title>The complete genome sequence of Bacillus thuringiensis Al Hakam.</title>
        <authorList>
            <person name="Challacombe J.F."/>
            <person name="Altherr M.R."/>
            <person name="Xie G."/>
            <person name="Bhotika S.S."/>
            <person name="Brown N."/>
            <person name="Bruce D."/>
            <person name="Campbell C.S."/>
            <person name="Campbell M.L."/>
            <person name="Chen J."/>
            <person name="Chertkov O."/>
            <person name="Cleland C."/>
            <person name="Dimitrijevic M."/>
            <person name="Doggett N.A."/>
            <person name="Fawcett J.J."/>
            <person name="Glavina T."/>
            <person name="Goodwin L.A."/>
            <person name="Green L.D."/>
            <person name="Han C.S."/>
            <person name="Hill K.K."/>
            <person name="Hitchcock P."/>
            <person name="Jackson P.J."/>
            <person name="Keim P."/>
            <person name="Kewalramani A.R."/>
            <person name="Longmire J."/>
            <person name="Lucas S."/>
            <person name="Malfatti S."/>
            <person name="Martinez D."/>
            <person name="McMurry K."/>
            <person name="Meincke L.J."/>
            <person name="Misra M."/>
            <person name="Moseman B.L."/>
            <person name="Mundt M."/>
            <person name="Munk A.C."/>
            <person name="Okinaka R.T."/>
            <person name="Parson-Quintana B."/>
            <person name="Reilly L.P."/>
            <person name="Richardson P."/>
            <person name="Robinson D.L."/>
            <person name="Saunders E."/>
            <person name="Tapia R."/>
            <person name="Tesmer J.G."/>
            <person name="Thayer N."/>
            <person name="Thompson L.S."/>
            <person name="Tice H."/>
            <person name="Ticknor L.O."/>
            <person name="Wills P.L."/>
            <person name="Gilna P."/>
            <person name="Brettin T.S."/>
        </authorList>
    </citation>
    <scope>NUCLEOTIDE SEQUENCE [LARGE SCALE GENOMIC DNA]</scope>
    <source>
        <strain>Al Hakam</strain>
    </source>
</reference>
<evidence type="ECO:0000255" key="1">
    <source>
        <dbReference type="HAMAP-Rule" id="MF_01342"/>
    </source>
</evidence>
<evidence type="ECO:0000305" key="2"/>
<name>RL16_BACAH</name>
<organism>
    <name type="scientific">Bacillus thuringiensis (strain Al Hakam)</name>
    <dbReference type="NCBI Taxonomy" id="412694"/>
    <lineage>
        <taxon>Bacteria</taxon>
        <taxon>Bacillati</taxon>
        <taxon>Bacillota</taxon>
        <taxon>Bacilli</taxon>
        <taxon>Bacillales</taxon>
        <taxon>Bacillaceae</taxon>
        <taxon>Bacillus</taxon>
        <taxon>Bacillus cereus group</taxon>
    </lineage>
</organism>
<proteinExistence type="inferred from homology"/>